<feature type="chain" id="PRO_1000086452" description="Large ribosomal subunit protein uL3">
    <location>
        <begin position="1"/>
        <end position="218"/>
    </location>
</feature>
<feature type="modified residue" description="N5-methylglutamine" evidence="1">
    <location>
        <position position="154"/>
    </location>
</feature>
<sequence length="218" mass="22895">MSLGLIGRKVGMTRLFTDEGDSIPVTVIDVSDNRIAQIKTQATDGYDAIQLAHGTRRATRVTKAMAGHFAKAGVMAGNGLNEFQLDAAKIAEMTPGQVIPADTAFTAGQKVDVQGVSIGKGYAGTIKRYHFASGRASHGNSRSHNVPGSIGMAQDPGRVFPGKRMTGHLGDVTRTVQNLVIARIDAERNLIMVKGAIPGAPGGKVIVTPAVKTPLKKK</sequence>
<organism>
    <name type="scientific">Polynucleobacter asymbioticus (strain DSM 18221 / CIP 109841 / QLW-P1DMWA-1)</name>
    <name type="common">Polynucleobacter necessarius subsp. asymbioticus</name>
    <dbReference type="NCBI Taxonomy" id="312153"/>
    <lineage>
        <taxon>Bacteria</taxon>
        <taxon>Pseudomonadati</taxon>
        <taxon>Pseudomonadota</taxon>
        <taxon>Betaproteobacteria</taxon>
        <taxon>Burkholderiales</taxon>
        <taxon>Burkholderiaceae</taxon>
        <taxon>Polynucleobacter</taxon>
    </lineage>
</organism>
<protein>
    <recommendedName>
        <fullName evidence="1">Large ribosomal subunit protein uL3</fullName>
    </recommendedName>
    <alternativeName>
        <fullName evidence="2">50S ribosomal protein L3</fullName>
    </alternativeName>
</protein>
<gene>
    <name evidence="1" type="primary">rplC</name>
    <name type="ordered locus">Pnuc_0053</name>
</gene>
<dbReference type="EMBL" id="CP000655">
    <property type="protein sequence ID" value="ABP33275.1"/>
    <property type="molecule type" value="Genomic_DNA"/>
</dbReference>
<dbReference type="RefSeq" id="WP_011901900.1">
    <property type="nucleotide sequence ID" value="NC_009379.1"/>
</dbReference>
<dbReference type="SMR" id="A4SUW1"/>
<dbReference type="GeneID" id="31480399"/>
<dbReference type="KEGG" id="pnu:Pnuc_0053"/>
<dbReference type="eggNOG" id="COG0087">
    <property type="taxonomic scope" value="Bacteria"/>
</dbReference>
<dbReference type="HOGENOM" id="CLU_044142_4_1_4"/>
<dbReference type="Proteomes" id="UP000000231">
    <property type="component" value="Chromosome"/>
</dbReference>
<dbReference type="GO" id="GO:0022625">
    <property type="term" value="C:cytosolic large ribosomal subunit"/>
    <property type="evidence" value="ECO:0007669"/>
    <property type="project" value="TreeGrafter"/>
</dbReference>
<dbReference type="GO" id="GO:0019843">
    <property type="term" value="F:rRNA binding"/>
    <property type="evidence" value="ECO:0007669"/>
    <property type="project" value="UniProtKB-UniRule"/>
</dbReference>
<dbReference type="GO" id="GO:0003735">
    <property type="term" value="F:structural constituent of ribosome"/>
    <property type="evidence" value="ECO:0007669"/>
    <property type="project" value="InterPro"/>
</dbReference>
<dbReference type="GO" id="GO:0006412">
    <property type="term" value="P:translation"/>
    <property type="evidence" value="ECO:0007669"/>
    <property type="project" value="UniProtKB-UniRule"/>
</dbReference>
<dbReference type="FunFam" id="2.40.30.10:FF:000004">
    <property type="entry name" value="50S ribosomal protein L3"/>
    <property type="match status" value="1"/>
</dbReference>
<dbReference type="FunFam" id="3.30.160.810:FF:000001">
    <property type="entry name" value="50S ribosomal protein L3"/>
    <property type="match status" value="1"/>
</dbReference>
<dbReference type="Gene3D" id="3.30.160.810">
    <property type="match status" value="1"/>
</dbReference>
<dbReference type="Gene3D" id="2.40.30.10">
    <property type="entry name" value="Translation factors"/>
    <property type="match status" value="1"/>
</dbReference>
<dbReference type="HAMAP" id="MF_01325_B">
    <property type="entry name" value="Ribosomal_uL3_B"/>
    <property type="match status" value="1"/>
</dbReference>
<dbReference type="InterPro" id="IPR000597">
    <property type="entry name" value="Ribosomal_uL3"/>
</dbReference>
<dbReference type="InterPro" id="IPR019927">
    <property type="entry name" value="Ribosomal_uL3_bac/org-type"/>
</dbReference>
<dbReference type="InterPro" id="IPR019926">
    <property type="entry name" value="Ribosomal_uL3_CS"/>
</dbReference>
<dbReference type="InterPro" id="IPR009000">
    <property type="entry name" value="Transl_B-barrel_sf"/>
</dbReference>
<dbReference type="NCBIfam" id="TIGR03625">
    <property type="entry name" value="L3_bact"/>
    <property type="match status" value="1"/>
</dbReference>
<dbReference type="PANTHER" id="PTHR11229">
    <property type="entry name" value="50S RIBOSOMAL PROTEIN L3"/>
    <property type="match status" value="1"/>
</dbReference>
<dbReference type="PANTHER" id="PTHR11229:SF16">
    <property type="entry name" value="LARGE RIBOSOMAL SUBUNIT PROTEIN UL3C"/>
    <property type="match status" value="1"/>
</dbReference>
<dbReference type="Pfam" id="PF00297">
    <property type="entry name" value="Ribosomal_L3"/>
    <property type="match status" value="1"/>
</dbReference>
<dbReference type="SUPFAM" id="SSF50447">
    <property type="entry name" value="Translation proteins"/>
    <property type="match status" value="1"/>
</dbReference>
<dbReference type="PROSITE" id="PS00474">
    <property type="entry name" value="RIBOSOMAL_L3"/>
    <property type="match status" value="1"/>
</dbReference>
<reference key="1">
    <citation type="journal article" date="2012" name="Stand. Genomic Sci.">
        <title>Complete genome sequence of Polynucleobacter necessarius subsp. asymbioticus type strain (QLW-P1DMWA-1(T)).</title>
        <authorList>
            <person name="Meincke L."/>
            <person name="Copeland A."/>
            <person name="Lapidus A."/>
            <person name="Lucas S."/>
            <person name="Berry K.W."/>
            <person name="Del Rio T.G."/>
            <person name="Hammon N."/>
            <person name="Dalin E."/>
            <person name="Tice H."/>
            <person name="Pitluck S."/>
            <person name="Richardson P."/>
            <person name="Bruce D."/>
            <person name="Goodwin L."/>
            <person name="Han C."/>
            <person name="Tapia R."/>
            <person name="Detter J.C."/>
            <person name="Schmutz J."/>
            <person name="Brettin T."/>
            <person name="Larimer F."/>
            <person name="Land M."/>
            <person name="Hauser L."/>
            <person name="Kyrpides N.C."/>
            <person name="Ivanova N."/>
            <person name="Goker M."/>
            <person name="Woyke T."/>
            <person name="Wu Q.L."/>
            <person name="Pockl M."/>
            <person name="Hahn M.W."/>
            <person name="Klenk H.P."/>
        </authorList>
    </citation>
    <scope>NUCLEOTIDE SEQUENCE [LARGE SCALE GENOMIC DNA]</scope>
    <source>
        <strain>DSM 18221 / CIP 109841 / QLW-P1DMWA-1</strain>
    </source>
</reference>
<comment type="function">
    <text evidence="1">One of the primary rRNA binding proteins, it binds directly near the 3'-end of the 23S rRNA, where it nucleates assembly of the 50S subunit.</text>
</comment>
<comment type="subunit">
    <text evidence="1">Part of the 50S ribosomal subunit. Forms a cluster with proteins L14 and L19.</text>
</comment>
<comment type="PTM">
    <text evidence="1">Methylated by PrmB.</text>
</comment>
<comment type="similarity">
    <text evidence="1">Belongs to the universal ribosomal protein uL3 family.</text>
</comment>
<keyword id="KW-0488">Methylation</keyword>
<keyword id="KW-1185">Reference proteome</keyword>
<keyword id="KW-0687">Ribonucleoprotein</keyword>
<keyword id="KW-0689">Ribosomal protein</keyword>
<keyword id="KW-0694">RNA-binding</keyword>
<keyword id="KW-0699">rRNA-binding</keyword>
<name>RL3_POLAQ</name>
<proteinExistence type="inferred from homology"/>
<evidence type="ECO:0000255" key="1">
    <source>
        <dbReference type="HAMAP-Rule" id="MF_01325"/>
    </source>
</evidence>
<evidence type="ECO:0000305" key="2"/>
<accession>A4SUW1</accession>